<accession>B1W3B1</accession>
<comment type="function">
    <text evidence="1">Regulates arginine biosynthesis genes.</text>
</comment>
<comment type="pathway">
    <text>Amino-acid biosynthesis; L-arginine biosynthesis [regulation].</text>
</comment>
<comment type="subcellular location">
    <subcellularLocation>
        <location evidence="1">Cytoplasm</location>
    </subcellularLocation>
</comment>
<comment type="similarity">
    <text evidence="1">Belongs to the ArgR family.</text>
</comment>
<sequence length="178" mass="19055">MTEAQEPEYGGPSVPQTRTARHRRIVDILNRQPVRSQSQLAKLLADDGLSVTQATLSRDLDELGAVKIRNTGGELIYAVPSEGGFRTPQAPLGGSAKEERMRRLSAELLISAEASANLVVLRTPPGAAQFLASAIDQAELHDILGTIAGDDTLMLISRDPSGGQALADHLLRLAQNDR</sequence>
<gene>
    <name evidence="1" type="primary">argR</name>
    <name type="ordered locus">SGR_5964</name>
</gene>
<dbReference type="EMBL" id="AP009493">
    <property type="protein sequence ID" value="BAG22793.1"/>
    <property type="molecule type" value="Genomic_DNA"/>
</dbReference>
<dbReference type="RefSeq" id="WP_003970272.1">
    <property type="nucleotide sequence ID" value="NC_010572.1"/>
</dbReference>
<dbReference type="SMR" id="B1W3B1"/>
<dbReference type="KEGG" id="sgr:SGR_5964"/>
<dbReference type="eggNOG" id="COG1438">
    <property type="taxonomic scope" value="Bacteria"/>
</dbReference>
<dbReference type="HOGENOM" id="CLU_097103_1_1_11"/>
<dbReference type="UniPathway" id="UPA00068"/>
<dbReference type="Proteomes" id="UP000001685">
    <property type="component" value="Chromosome"/>
</dbReference>
<dbReference type="GO" id="GO:0005737">
    <property type="term" value="C:cytoplasm"/>
    <property type="evidence" value="ECO:0007669"/>
    <property type="project" value="UniProtKB-SubCell"/>
</dbReference>
<dbReference type="GO" id="GO:0034618">
    <property type="term" value="F:arginine binding"/>
    <property type="evidence" value="ECO:0007669"/>
    <property type="project" value="InterPro"/>
</dbReference>
<dbReference type="GO" id="GO:0003677">
    <property type="term" value="F:DNA binding"/>
    <property type="evidence" value="ECO:0007669"/>
    <property type="project" value="UniProtKB-KW"/>
</dbReference>
<dbReference type="GO" id="GO:0003700">
    <property type="term" value="F:DNA-binding transcription factor activity"/>
    <property type="evidence" value="ECO:0007669"/>
    <property type="project" value="UniProtKB-UniRule"/>
</dbReference>
<dbReference type="GO" id="GO:0006526">
    <property type="term" value="P:L-arginine biosynthetic process"/>
    <property type="evidence" value="ECO:0007669"/>
    <property type="project" value="UniProtKB-UniPathway"/>
</dbReference>
<dbReference type="GO" id="GO:0051259">
    <property type="term" value="P:protein complex oligomerization"/>
    <property type="evidence" value="ECO:0007669"/>
    <property type="project" value="InterPro"/>
</dbReference>
<dbReference type="GO" id="GO:1900079">
    <property type="term" value="P:regulation of arginine biosynthetic process"/>
    <property type="evidence" value="ECO:0007669"/>
    <property type="project" value="UniProtKB-UniRule"/>
</dbReference>
<dbReference type="Gene3D" id="3.30.1360.40">
    <property type="match status" value="1"/>
</dbReference>
<dbReference type="Gene3D" id="1.10.10.10">
    <property type="entry name" value="Winged helix-like DNA-binding domain superfamily/Winged helix DNA-binding domain"/>
    <property type="match status" value="1"/>
</dbReference>
<dbReference type="HAMAP" id="MF_00173">
    <property type="entry name" value="Arg_repressor"/>
    <property type="match status" value="1"/>
</dbReference>
<dbReference type="InterPro" id="IPR001669">
    <property type="entry name" value="Arg_repress"/>
</dbReference>
<dbReference type="InterPro" id="IPR020899">
    <property type="entry name" value="Arg_repress_C"/>
</dbReference>
<dbReference type="InterPro" id="IPR036251">
    <property type="entry name" value="Arg_repress_C_sf"/>
</dbReference>
<dbReference type="InterPro" id="IPR020900">
    <property type="entry name" value="Arg_repress_DNA-bd"/>
</dbReference>
<dbReference type="InterPro" id="IPR036388">
    <property type="entry name" value="WH-like_DNA-bd_sf"/>
</dbReference>
<dbReference type="InterPro" id="IPR036390">
    <property type="entry name" value="WH_DNA-bd_sf"/>
</dbReference>
<dbReference type="NCBIfam" id="TIGR01529">
    <property type="entry name" value="argR_whole"/>
    <property type="match status" value="1"/>
</dbReference>
<dbReference type="NCBIfam" id="NF002880">
    <property type="entry name" value="PRK03341.1"/>
    <property type="match status" value="1"/>
</dbReference>
<dbReference type="PANTHER" id="PTHR34471">
    <property type="entry name" value="ARGININE REPRESSOR"/>
    <property type="match status" value="1"/>
</dbReference>
<dbReference type="PANTHER" id="PTHR34471:SF1">
    <property type="entry name" value="ARGININE REPRESSOR"/>
    <property type="match status" value="1"/>
</dbReference>
<dbReference type="Pfam" id="PF01316">
    <property type="entry name" value="Arg_repressor"/>
    <property type="match status" value="1"/>
</dbReference>
<dbReference type="Pfam" id="PF02863">
    <property type="entry name" value="Arg_repressor_C"/>
    <property type="match status" value="1"/>
</dbReference>
<dbReference type="PRINTS" id="PR01467">
    <property type="entry name" value="ARGREPRESSOR"/>
</dbReference>
<dbReference type="SUPFAM" id="SSF55252">
    <property type="entry name" value="C-terminal domain of arginine repressor"/>
    <property type="match status" value="1"/>
</dbReference>
<dbReference type="SUPFAM" id="SSF46785">
    <property type="entry name" value="Winged helix' DNA-binding domain"/>
    <property type="match status" value="1"/>
</dbReference>
<reference key="1">
    <citation type="journal article" date="2008" name="J. Bacteriol.">
        <title>Genome sequence of the streptomycin-producing microorganism Streptomyces griseus IFO 13350.</title>
        <authorList>
            <person name="Ohnishi Y."/>
            <person name="Ishikawa J."/>
            <person name="Hara H."/>
            <person name="Suzuki H."/>
            <person name="Ikenoya M."/>
            <person name="Ikeda H."/>
            <person name="Yamashita A."/>
            <person name="Hattori M."/>
            <person name="Horinouchi S."/>
        </authorList>
    </citation>
    <scope>NUCLEOTIDE SEQUENCE [LARGE SCALE GENOMIC DNA]</scope>
    <source>
        <strain>JCM 4626 / CBS 651.72 / NBRC 13350 / KCC S-0626 / ISP 5235</strain>
    </source>
</reference>
<feature type="chain" id="PRO_1000097890" description="Arginine repressor">
    <location>
        <begin position="1"/>
        <end position="178"/>
    </location>
</feature>
<feature type="region of interest" description="Disordered" evidence="2">
    <location>
        <begin position="1"/>
        <end position="20"/>
    </location>
</feature>
<protein>
    <recommendedName>
        <fullName evidence="1">Arginine repressor</fullName>
    </recommendedName>
</protein>
<name>ARGR_STRGG</name>
<evidence type="ECO:0000255" key="1">
    <source>
        <dbReference type="HAMAP-Rule" id="MF_00173"/>
    </source>
</evidence>
<evidence type="ECO:0000256" key="2">
    <source>
        <dbReference type="SAM" id="MobiDB-lite"/>
    </source>
</evidence>
<proteinExistence type="inferred from homology"/>
<organism>
    <name type="scientific">Streptomyces griseus subsp. griseus (strain JCM 4626 / CBS 651.72 / NBRC 13350 / KCC S-0626 / ISP 5235)</name>
    <dbReference type="NCBI Taxonomy" id="455632"/>
    <lineage>
        <taxon>Bacteria</taxon>
        <taxon>Bacillati</taxon>
        <taxon>Actinomycetota</taxon>
        <taxon>Actinomycetes</taxon>
        <taxon>Kitasatosporales</taxon>
        <taxon>Streptomycetaceae</taxon>
        <taxon>Streptomyces</taxon>
    </lineage>
</organism>
<keyword id="KW-0028">Amino-acid biosynthesis</keyword>
<keyword id="KW-0055">Arginine biosynthesis</keyword>
<keyword id="KW-0963">Cytoplasm</keyword>
<keyword id="KW-0238">DNA-binding</keyword>
<keyword id="KW-0678">Repressor</keyword>
<keyword id="KW-0804">Transcription</keyword>
<keyword id="KW-0805">Transcription regulation</keyword>